<organism>
    <name type="scientific">Canis lupus familiaris</name>
    <name type="common">Dog</name>
    <name type="synonym">Canis familiaris</name>
    <dbReference type="NCBI Taxonomy" id="9615"/>
    <lineage>
        <taxon>Eukaryota</taxon>
        <taxon>Metazoa</taxon>
        <taxon>Chordata</taxon>
        <taxon>Craniata</taxon>
        <taxon>Vertebrata</taxon>
        <taxon>Euteleostomi</taxon>
        <taxon>Mammalia</taxon>
        <taxon>Eutheria</taxon>
        <taxon>Laurasiatheria</taxon>
        <taxon>Carnivora</taxon>
        <taxon>Caniformia</taxon>
        <taxon>Canidae</taxon>
        <taxon>Canis</taxon>
    </lineage>
</organism>
<reference key="1">
    <citation type="journal article" date="1975" name="Thromb. Res.">
        <title>Studies of the structure of canine fibrinogen.</title>
        <authorList>
            <person name="Birken S."/>
            <person name="Wilner G.D."/>
            <person name="Canfield R.E."/>
        </authorList>
    </citation>
    <scope>PROTEIN SEQUENCE</scope>
</reference>
<reference key="2">
    <citation type="journal article" date="1965" name="Acta Chem. Scand.">
        <title>Studies on fibrinopeptides from mammals.</title>
        <authorList>
            <person name="Blombaeck B."/>
            <person name="Blombaeck M."/>
            <person name="Grondahl N.J."/>
        </authorList>
    </citation>
    <scope>PROTEIN SEQUENCE OF 1-16</scope>
</reference>
<reference key="3">
    <citation type="journal article" date="1964" name="Biochem. Biophys. Res. Commun.">
        <title>The nature of the peptides released from canine fibrinogen.</title>
        <authorList>
            <person name="Osbahr A.J. Jr."/>
            <person name="Colman R.W."/>
            <person name="Laki K."/>
            <person name="Gladner J.A."/>
        </authorList>
    </citation>
    <scope>PROTEIN SEQUENCE OF 1-16</scope>
    <scope>PHOSPHORYLATION AT SER-3</scope>
</reference>
<feature type="peptide" id="PRO_0000009009" description="Fibrinopeptide A">
    <location>
        <begin position="1"/>
        <end position="16"/>
    </location>
</feature>
<feature type="chain" id="PRO_0000045384" description="Fibrinogen alpha chain">
    <location>
        <begin position="17"/>
        <end position="28" status="greater than"/>
    </location>
</feature>
<feature type="modified residue" description="Phosphoserine" evidence="3">
    <location>
        <position position="3"/>
    </location>
</feature>
<feature type="sequence conflict" description="In Ref. 2; AA sequence." evidence="4" ref="2">
    <original>N</original>
    <variation>D</variation>
    <location>
        <position position="2"/>
    </location>
</feature>
<feature type="sequence conflict" description="In Ref. 2; AA sequence." evidence="4" ref="2">
    <original>KEGE</original>
    <variation>EGKQ</variation>
    <location>
        <begin position="4"/>
        <end position="7"/>
    </location>
</feature>
<feature type="non-terminal residue">
    <location>
        <position position="28"/>
    </location>
</feature>
<sequence>TNSKEGEFIAEGGGVRGPRIVERXQSAC</sequence>
<accession>P68213</accession>
<accession>P02673</accession>
<accession>P14464</accession>
<protein>
    <recommendedName>
        <fullName>Fibrinogen alpha chain</fullName>
    </recommendedName>
    <component>
        <recommendedName>
            <fullName>Fibrinopeptide A</fullName>
        </recommendedName>
    </component>
    <component>
        <recommendedName>
            <fullName>Fibrinogen alpha chain</fullName>
        </recommendedName>
    </component>
</protein>
<comment type="function">
    <text evidence="1">Cleaved by the protease thrombin to yield monomers which, together with fibrinogen beta (FGB) and fibrinogen gamma (FGG), polymerize to form an insoluble fibrin matrix. Fibrin has a major function in hemostasis as one of the primary components of blood clots. In addition, functions during the early stages of wound repair to stabilize the lesion and guide cell migration during re-epithelialization. Was originally thought to be essential for platelet aggregation, based on in vitro studies using anticoagulated blood. However, subsequent studies have shown that it is not absolutely required for thrombus formation in vivo. Enhances expression of SELP in activated platelets via an ITGB3-dependent pathway. Maternal fibrinogen is essential for successful pregnancy. Fibrin deposition is also associated with infection, where it protects against IFNG-mediated hemorrhage. May also facilitate the immune response via both innate and T-cell mediated pathways.</text>
</comment>
<comment type="subunit">
    <text evidence="2">Heterohexamer; disulfide linked. Contains 2 sets of 3 non-identical chains (alpha, beta and gamma). The 2 heterotrimers are in head to head conformation with the N-termini in a small central domain (By similarity).</text>
</comment>
<comment type="subcellular location">
    <subcellularLocation>
        <location>Secreted</location>
    </subcellularLocation>
</comment>
<comment type="domain">
    <text evidence="2">A long coiled coil structure formed by 3 polypeptide chains connects the central nodule to the C-terminal domains (distal nodules). The long C-terminal ends of the alpha chains fold back, contributing a fourth strand to the coiled coil structure.</text>
</comment>
<comment type="PTM">
    <text>Conversion of fibrinogen to fibrin is triggered by thrombin, which cleaves fibrinopeptides A and B from alpha and beta chains, and thus exposes the N-terminal polymerization sites responsible for the formation of the soft clot. The soft clot is converted into the hard clot by factor XIIIA which catalyzes the epsilon-(gamma-glutamyl)lysine cross-linking between gamma chains (stronger) and between alpha chains (weaker) of different monomers.</text>
</comment>
<comment type="PTM">
    <text>Forms F13A-mediated cross-links between a glutamine and the epsilon-amino group of a lysine residue, forming fibronectin-fibrinogen heteropolymers.</text>
</comment>
<dbReference type="PIR" id="A94308">
    <property type="entry name" value="A05296"/>
</dbReference>
<dbReference type="FunCoup" id="P68213">
    <property type="interactions" value="125"/>
</dbReference>
<dbReference type="STRING" id="9615.ENSCAFP00000036232"/>
<dbReference type="iPTMnet" id="P68213"/>
<dbReference type="PaxDb" id="9612-ENSCAFP00000012402"/>
<dbReference type="eggNOG" id="KOG2579">
    <property type="taxonomic scope" value="Eukaryota"/>
</dbReference>
<dbReference type="InParanoid" id="P68213"/>
<dbReference type="Proteomes" id="UP000002254">
    <property type="component" value="Unplaced"/>
</dbReference>
<dbReference type="Proteomes" id="UP000694429">
    <property type="component" value="Unplaced"/>
</dbReference>
<dbReference type="Proteomes" id="UP000694542">
    <property type="component" value="Unplaced"/>
</dbReference>
<dbReference type="Proteomes" id="UP000805418">
    <property type="component" value="Unplaced"/>
</dbReference>
<dbReference type="GO" id="GO:0005576">
    <property type="term" value="C:extracellular region"/>
    <property type="evidence" value="ECO:0007669"/>
    <property type="project" value="UniProtKB-SubCell"/>
</dbReference>
<dbReference type="GO" id="GO:0002250">
    <property type="term" value="P:adaptive immune response"/>
    <property type="evidence" value="ECO:0007669"/>
    <property type="project" value="UniProtKB-KW"/>
</dbReference>
<dbReference type="GO" id="GO:0007596">
    <property type="term" value="P:blood coagulation"/>
    <property type="evidence" value="ECO:0007669"/>
    <property type="project" value="UniProtKB-KW"/>
</dbReference>
<dbReference type="GO" id="GO:0045087">
    <property type="term" value="P:innate immune response"/>
    <property type="evidence" value="ECO:0007669"/>
    <property type="project" value="UniProtKB-KW"/>
</dbReference>
<name>FIBA_CANLF</name>
<proteinExistence type="evidence at protein level"/>
<keyword id="KW-1064">Adaptive immunity</keyword>
<keyword id="KW-0094">Blood coagulation</keyword>
<keyword id="KW-0175">Coiled coil</keyword>
<keyword id="KW-0903">Direct protein sequencing</keyword>
<keyword id="KW-1015">Disulfide bond</keyword>
<keyword id="KW-0356">Hemostasis</keyword>
<keyword id="KW-0391">Immunity</keyword>
<keyword id="KW-0399">Innate immunity</keyword>
<keyword id="KW-0597">Phosphoprotein</keyword>
<keyword id="KW-1185">Reference proteome</keyword>
<keyword id="KW-0964">Secreted</keyword>
<evidence type="ECO:0000250" key="1">
    <source>
        <dbReference type="UniProtKB" id="E9PV24"/>
    </source>
</evidence>
<evidence type="ECO:0000250" key="2">
    <source>
        <dbReference type="UniProtKB" id="P02671"/>
    </source>
</evidence>
<evidence type="ECO:0000269" key="3">
    <source>
    </source>
</evidence>
<evidence type="ECO:0000305" key="4"/>
<gene>
    <name type="primary">FGA</name>
</gene>